<evidence type="ECO:0000255" key="1">
    <source>
        <dbReference type="HAMAP-Rule" id="MF_00406"/>
    </source>
</evidence>
<evidence type="ECO:0000305" key="2"/>
<keyword id="KW-0963">Cytoplasm</keyword>
<keyword id="KW-0441">Lipid A biosynthesis</keyword>
<keyword id="KW-0444">Lipid biosynthesis</keyword>
<keyword id="KW-0443">Lipid metabolism</keyword>
<keyword id="KW-0456">Lyase</keyword>
<keyword id="KW-1185">Reference proteome</keyword>
<comment type="function">
    <text evidence="1">Involved in unsaturated fatty acids biosynthesis. Catalyzes the dehydration of short chain beta-hydroxyacyl-ACPs and long chain saturated and unsaturated beta-hydroxyacyl-ACPs.</text>
</comment>
<comment type="catalytic activity">
    <reaction evidence="1">
        <text>a (3R)-hydroxyacyl-[ACP] = a (2E)-enoyl-[ACP] + H2O</text>
        <dbReference type="Rhea" id="RHEA:13097"/>
        <dbReference type="Rhea" id="RHEA-COMP:9925"/>
        <dbReference type="Rhea" id="RHEA-COMP:9945"/>
        <dbReference type="ChEBI" id="CHEBI:15377"/>
        <dbReference type="ChEBI" id="CHEBI:78784"/>
        <dbReference type="ChEBI" id="CHEBI:78827"/>
        <dbReference type="EC" id="4.2.1.59"/>
    </reaction>
</comment>
<comment type="subcellular location">
    <subcellularLocation>
        <location evidence="1">Cytoplasm</location>
    </subcellularLocation>
</comment>
<comment type="similarity">
    <text evidence="1">Belongs to the thioester dehydratase family. FabZ subfamily.</text>
</comment>
<comment type="sequence caution" evidence="2">
    <conflict type="erroneous initiation">
        <sequence resource="EMBL-CDS" id="ABE49787"/>
    </conflict>
</comment>
<protein>
    <recommendedName>
        <fullName evidence="1">3-hydroxyacyl-[acyl-carrier-protein] dehydratase FabZ</fullName>
        <ecNumber evidence="1">4.2.1.59</ecNumber>
    </recommendedName>
    <alternativeName>
        <fullName evidence="1">(3R)-hydroxymyristoyl-[acyl-carrier-protein] dehydratase</fullName>
        <shortName evidence="1">(3R)-hydroxymyristoyl-ACP dehydrase</shortName>
    </alternativeName>
    <alternativeName>
        <fullName evidence="1">Beta-hydroxyacyl-ACP dehydratase</fullName>
    </alternativeName>
</protein>
<sequence>MDIHEILNYLPHRYPFVLVDRVLSLELNKEIVAVKNVTINEPFFPGHFPYHPVMPGVLIVEALAQAAAILSFKTMGTKPNDKSVYYFAGMDNVRFKKPVSPGDQLILKVSIDRILRGIWRYKGEALVDGAVVAEAEMMCILKAID</sequence>
<proteinExistence type="inferred from homology"/>
<feature type="chain" id="PRO_0000340786" description="3-hydroxyacyl-[acyl-carrier-protein] dehydratase FabZ">
    <location>
        <begin position="1"/>
        <end position="145"/>
    </location>
</feature>
<feature type="active site" evidence="1">
    <location>
        <position position="47"/>
    </location>
</feature>
<organism>
    <name type="scientific">Methylobacillus flagellatus (strain ATCC 51484 / DSM 6875 / VKM B-1610 / KT)</name>
    <dbReference type="NCBI Taxonomy" id="265072"/>
    <lineage>
        <taxon>Bacteria</taxon>
        <taxon>Pseudomonadati</taxon>
        <taxon>Pseudomonadota</taxon>
        <taxon>Betaproteobacteria</taxon>
        <taxon>Nitrosomonadales</taxon>
        <taxon>Methylophilaceae</taxon>
        <taxon>Methylobacillus</taxon>
    </lineage>
</organism>
<dbReference type="EC" id="4.2.1.59" evidence="1"/>
<dbReference type="EMBL" id="CP000284">
    <property type="protein sequence ID" value="ABE49787.1"/>
    <property type="status" value="ALT_INIT"/>
    <property type="molecule type" value="Genomic_DNA"/>
</dbReference>
<dbReference type="RefSeq" id="WP_011479741.1">
    <property type="nucleotide sequence ID" value="NC_007947.1"/>
</dbReference>
<dbReference type="SMR" id="Q1H150"/>
<dbReference type="STRING" id="265072.Mfla_1519"/>
<dbReference type="KEGG" id="mfa:Mfla_1519"/>
<dbReference type="eggNOG" id="COG0764">
    <property type="taxonomic scope" value="Bacteria"/>
</dbReference>
<dbReference type="HOGENOM" id="CLU_078912_1_2_4"/>
<dbReference type="OrthoDB" id="9772788at2"/>
<dbReference type="Proteomes" id="UP000002440">
    <property type="component" value="Chromosome"/>
</dbReference>
<dbReference type="GO" id="GO:0005737">
    <property type="term" value="C:cytoplasm"/>
    <property type="evidence" value="ECO:0007669"/>
    <property type="project" value="UniProtKB-SubCell"/>
</dbReference>
<dbReference type="GO" id="GO:0016020">
    <property type="term" value="C:membrane"/>
    <property type="evidence" value="ECO:0007669"/>
    <property type="project" value="GOC"/>
</dbReference>
<dbReference type="GO" id="GO:0019171">
    <property type="term" value="F:(3R)-hydroxyacyl-[acyl-carrier-protein] dehydratase activity"/>
    <property type="evidence" value="ECO:0007669"/>
    <property type="project" value="UniProtKB-EC"/>
</dbReference>
<dbReference type="GO" id="GO:0006633">
    <property type="term" value="P:fatty acid biosynthetic process"/>
    <property type="evidence" value="ECO:0007669"/>
    <property type="project" value="UniProtKB-UniRule"/>
</dbReference>
<dbReference type="GO" id="GO:0009245">
    <property type="term" value="P:lipid A biosynthetic process"/>
    <property type="evidence" value="ECO:0007669"/>
    <property type="project" value="UniProtKB-UniRule"/>
</dbReference>
<dbReference type="CDD" id="cd01288">
    <property type="entry name" value="FabZ"/>
    <property type="match status" value="1"/>
</dbReference>
<dbReference type="FunFam" id="3.10.129.10:FF:000001">
    <property type="entry name" value="3-hydroxyacyl-[acyl-carrier-protein] dehydratase FabZ"/>
    <property type="match status" value="1"/>
</dbReference>
<dbReference type="Gene3D" id="3.10.129.10">
    <property type="entry name" value="Hotdog Thioesterase"/>
    <property type="match status" value="1"/>
</dbReference>
<dbReference type="HAMAP" id="MF_00406">
    <property type="entry name" value="FabZ"/>
    <property type="match status" value="1"/>
</dbReference>
<dbReference type="InterPro" id="IPR013114">
    <property type="entry name" value="FabA_FabZ"/>
</dbReference>
<dbReference type="InterPro" id="IPR010084">
    <property type="entry name" value="FabZ"/>
</dbReference>
<dbReference type="InterPro" id="IPR029069">
    <property type="entry name" value="HotDog_dom_sf"/>
</dbReference>
<dbReference type="NCBIfam" id="TIGR01750">
    <property type="entry name" value="fabZ"/>
    <property type="match status" value="1"/>
</dbReference>
<dbReference type="NCBIfam" id="NF000582">
    <property type="entry name" value="PRK00006.1"/>
    <property type="match status" value="1"/>
</dbReference>
<dbReference type="PANTHER" id="PTHR30272">
    <property type="entry name" value="3-HYDROXYACYL-[ACYL-CARRIER-PROTEIN] DEHYDRATASE"/>
    <property type="match status" value="1"/>
</dbReference>
<dbReference type="PANTHER" id="PTHR30272:SF1">
    <property type="entry name" value="3-HYDROXYACYL-[ACYL-CARRIER-PROTEIN] DEHYDRATASE"/>
    <property type="match status" value="1"/>
</dbReference>
<dbReference type="Pfam" id="PF07977">
    <property type="entry name" value="FabA"/>
    <property type="match status" value="1"/>
</dbReference>
<dbReference type="SUPFAM" id="SSF54637">
    <property type="entry name" value="Thioesterase/thiol ester dehydrase-isomerase"/>
    <property type="match status" value="1"/>
</dbReference>
<name>FABZ_METFK</name>
<accession>Q1H150</accession>
<reference key="1">
    <citation type="submission" date="2006-03" db="EMBL/GenBank/DDBJ databases">
        <title>Complete sequence of Methylobacillus flagellatus KT.</title>
        <authorList>
            <consortium name="US DOE Joint Genome Institute"/>
            <person name="Copeland A."/>
            <person name="Lucas S."/>
            <person name="Lapidus A."/>
            <person name="Barry K."/>
            <person name="Detter J.C."/>
            <person name="Glavina del Rio T."/>
            <person name="Hammon N."/>
            <person name="Israni S."/>
            <person name="Dalin E."/>
            <person name="Tice H."/>
            <person name="Pitluck S."/>
            <person name="Brettin T."/>
            <person name="Bruce D."/>
            <person name="Han C."/>
            <person name="Tapia R."/>
            <person name="Saunders E."/>
            <person name="Gilna P."/>
            <person name="Schmutz J."/>
            <person name="Larimer F."/>
            <person name="Land M."/>
            <person name="Kyrpides N."/>
            <person name="Anderson I."/>
            <person name="Richardson P."/>
        </authorList>
    </citation>
    <scope>NUCLEOTIDE SEQUENCE [LARGE SCALE GENOMIC DNA]</scope>
    <source>
        <strain>ATCC 51484 / DSM 6875 / VKM B-1610 / KT</strain>
    </source>
</reference>
<gene>
    <name evidence="1" type="primary">fabZ</name>
    <name type="ordered locus">Mfla_1519</name>
</gene>